<comment type="function">
    <text evidence="2">Component of the ubiquinol-cytochrome c reductase complex (complex III or cytochrome b-c1 complex) that is part of the mitochondrial respiratory chain. The b-c1 complex mediates electron transfer from ubiquinol to cytochrome c. Contributes to the generation of a proton gradient across the mitochondrial membrane that is then used for ATP synthesis.</text>
</comment>
<comment type="cofactor">
    <cofactor evidence="2">
        <name>heme b</name>
        <dbReference type="ChEBI" id="CHEBI:60344"/>
    </cofactor>
    <text evidence="2">Binds 2 heme b groups non-covalently.</text>
</comment>
<comment type="subunit">
    <text evidence="2">The cytochrome bc1 complex contains 3 respiratory subunits (MT-CYB, CYC1 and UQCRFS1), 2 core proteins (UQCRC1 and UQCRC2) and probably 6 low-molecular weight proteins.</text>
</comment>
<comment type="subcellular location">
    <subcellularLocation>
        <location evidence="2">Mitochondrion inner membrane</location>
        <topology evidence="2">Multi-pass membrane protein</topology>
    </subcellularLocation>
</comment>
<comment type="miscellaneous">
    <text evidence="1">Heme 1 (or BL or b562) is low-potential and absorbs at about 562 nm, and heme 2 (or BH or b566) is high-potential and absorbs at about 566 nm.</text>
</comment>
<comment type="similarity">
    <text evidence="3 4">Belongs to the cytochrome b family.</text>
</comment>
<comment type="caution">
    <text evidence="2">The full-length protein contains only eight transmembrane helices, not nine as predicted by bioinformatics tools.</text>
</comment>
<organism>
    <name type="scientific">Acipenser transmontanus</name>
    <name type="common">White sturgeon</name>
    <dbReference type="NCBI Taxonomy" id="7904"/>
    <lineage>
        <taxon>Eukaryota</taxon>
        <taxon>Metazoa</taxon>
        <taxon>Chordata</taxon>
        <taxon>Craniata</taxon>
        <taxon>Vertebrata</taxon>
        <taxon>Euteleostomi</taxon>
        <taxon>Actinopterygii</taxon>
        <taxon>Chondrostei</taxon>
        <taxon>Acipenseriformes</taxon>
        <taxon>Acipenseridae</taxon>
        <taxon>Acipenser</taxon>
    </lineage>
</organism>
<name>CYB_ACITR</name>
<protein>
    <recommendedName>
        <fullName>Cytochrome b</fullName>
    </recommendedName>
    <alternativeName>
        <fullName>Complex III subunit 3</fullName>
    </alternativeName>
    <alternativeName>
        <fullName>Complex III subunit III</fullName>
    </alternativeName>
    <alternativeName>
        <fullName>Cytochrome b-c1 complex subunit 3</fullName>
    </alternativeName>
    <alternativeName>
        <fullName>Ubiquinol-cytochrome-c reductase complex cytochrome b subunit</fullName>
    </alternativeName>
</protein>
<geneLocation type="mitochondrion"/>
<dbReference type="EMBL" id="X14944">
    <property type="protein sequence ID" value="CAA33076.1"/>
    <property type="molecule type" value="Genomic_DNA"/>
</dbReference>
<dbReference type="PIR" id="S04840">
    <property type="entry name" value="S04840"/>
</dbReference>
<dbReference type="SMR" id="P11669"/>
<dbReference type="GO" id="GO:0005743">
    <property type="term" value="C:mitochondrial inner membrane"/>
    <property type="evidence" value="ECO:0007669"/>
    <property type="project" value="UniProtKB-SubCell"/>
</dbReference>
<dbReference type="GO" id="GO:0045275">
    <property type="term" value="C:respiratory chain complex III"/>
    <property type="evidence" value="ECO:0007669"/>
    <property type="project" value="InterPro"/>
</dbReference>
<dbReference type="GO" id="GO:0046872">
    <property type="term" value="F:metal ion binding"/>
    <property type="evidence" value="ECO:0007669"/>
    <property type="project" value="UniProtKB-KW"/>
</dbReference>
<dbReference type="GO" id="GO:0008121">
    <property type="term" value="F:ubiquinol-cytochrome-c reductase activity"/>
    <property type="evidence" value="ECO:0007669"/>
    <property type="project" value="InterPro"/>
</dbReference>
<dbReference type="GO" id="GO:0006122">
    <property type="term" value="P:mitochondrial electron transport, ubiquinol to cytochrome c"/>
    <property type="evidence" value="ECO:0007669"/>
    <property type="project" value="TreeGrafter"/>
</dbReference>
<dbReference type="CDD" id="cd00290">
    <property type="entry name" value="cytochrome_b_C"/>
    <property type="match status" value="1"/>
</dbReference>
<dbReference type="CDD" id="cd00284">
    <property type="entry name" value="Cytochrome_b_N"/>
    <property type="match status" value="1"/>
</dbReference>
<dbReference type="FunFam" id="1.20.810.10:FF:000002">
    <property type="entry name" value="Cytochrome b"/>
    <property type="match status" value="1"/>
</dbReference>
<dbReference type="Gene3D" id="1.20.810.10">
    <property type="entry name" value="Cytochrome Bc1 Complex, Chain C"/>
    <property type="match status" value="1"/>
</dbReference>
<dbReference type="InterPro" id="IPR005798">
    <property type="entry name" value="Cyt_b/b6_C"/>
</dbReference>
<dbReference type="InterPro" id="IPR036150">
    <property type="entry name" value="Cyt_b/b6_C_sf"/>
</dbReference>
<dbReference type="InterPro" id="IPR005797">
    <property type="entry name" value="Cyt_b/b6_N"/>
</dbReference>
<dbReference type="InterPro" id="IPR027387">
    <property type="entry name" value="Cytb/b6-like_sf"/>
</dbReference>
<dbReference type="InterPro" id="IPR030689">
    <property type="entry name" value="Cytochrome_b"/>
</dbReference>
<dbReference type="InterPro" id="IPR048260">
    <property type="entry name" value="Cytochrome_b_C_euk/bac"/>
</dbReference>
<dbReference type="InterPro" id="IPR048259">
    <property type="entry name" value="Cytochrome_b_N_euk/bac"/>
</dbReference>
<dbReference type="InterPro" id="IPR016174">
    <property type="entry name" value="Di-haem_cyt_TM"/>
</dbReference>
<dbReference type="PANTHER" id="PTHR19271">
    <property type="entry name" value="CYTOCHROME B"/>
    <property type="match status" value="1"/>
</dbReference>
<dbReference type="PANTHER" id="PTHR19271:SF16">
    <property type="entry name" value="CYTOCHROME B"/>
    <property type="match status" value="1"/>
</dbReference>
<dbReference type="Pfam" id="PF00032">
    <property type="entry name" value="Cytochrom_B_C"/>
    <property type="match status" value="1"/>
</dbReference>
<dbReference type="Pfam" id="PF00033">
    <property type="entry name" value="Cytochrome_B"/>
    <property type="match status" value="1"/>
</dbReference>
<dbReference type="PIRSF" id="PIRSF038885">
    <property type="entry name" value="COB"/>
    <property type="match status" value="1"/>
</dbReference>
<dbReference type="SUPFAM" id="SSF81648">
    <property type="entry name" value="a domain/subunit of cytochrome bc1 complex (Ubiquinol-cytochrome c reductase)"/>
    <property type="match status" value="1"/>
</dbReference>
<dbReference type="SUPFAM" id="SSF81342">
    <property type="entry name" value="Transmembrane di-heme cytochromes"/>
    <property type="match status" value="1"/>
</dbReference>
<dbReference type="PROSITE" id="PS51003">
    <property type="entry name" value="CYTB_CTER"/>
    <property type="match status" value="1"/>
</dbReference>
<dbReference type="PROSITE" id="PS51002">
    <property type="entry name" value="CYTB_NTER"/>
    <property type="match status" value="1"/>
</dbReference>
<evidence type="ECO:0000250" key="1"/>
<evidence type="ECO:0000250" key="2">
    <source>
        <dbReference type="UniProtKB" id="P00157"/>
    </source>
</evidence>
<evidence type="ECO:0000255" key="3">
    <source>
        <dbReference type="PROSITE-ProRule" id="PRU00967"/>
    </source>
</evidence>
<evidence type="ECO:0000255" key="4">
    <source>
        <dbReference type="PROSITE-ProRule" id="PRU00968"/>
    </source>
</evidence>
<keyword id="KW-0249">Electron transport</keyword>
<keyword id="KW-0349">Heme</keyword>
<keyword id="KW-0408">Iron</keyword>
<keyword id="KW-0472">Membrane</keyword>
<keyword id="KW-0479">Metal-binding</keyword>
<keyword id="KW-0496">Mitochondrion</keyword>
<keyword id="KW-0999">Mitochondrion inner membrane</keyword>
<keyword id="KW-0679">Respiratory chain</keyword>
<keyword id="KW-0812">Transmembrane</keyword>
<keyword id="KW-1133">Transmembrane helix</keyword>
<keyword id="KW-0813">Transport</keyword>
<keyword id="KW-0830">Ubiquinone</keyword>
<proteinExistence type="inferred from homology"/>
<gene>
    <name type="primary">mt-cyb</name>
    <name type="synonym">cob</name>
    <name type="synonym">cytb</name>
    <name type="synonym">mtcyb</name>
</gene>
<feature type="chain" id="PRO_0000060526" description="Cytochrome b">
    <location>
        <begin position="1"/>
        <end position="380"/>
    </location>
</feature>
<feature type="transmembrane region" description="Helical" evidence="2">
    <location>
        <begin position="33"/>
        <end position="53"/>
    </location>
</feature>
<feature type="transmembrane region" description="Helical" evidence="2">
    <location>
        <begin position="77"/>
        <end position="98"/>
    </location>
</feature>
<feature type="transmembrane region" description="Helical" evidence="2">
    <location>
        <begin position="113"/>
        <end position="133"/>
    </location>
</feature>
<feature type="transmembrane region" description="Helical" evidence="2">
    <location>
        <begin position="178"/>
        <end position="198"/>
    </location>
</feature>
<feature type="transmembrane region" description="Helical" evidence="2">
    <location>
        <begin position="226"/>
        <end position="246"/>
    </location>
</feature>
<feature type="transmembrane region" description="Helical" evidence="2">
    <location>
        <begin position="288"/>
        <end position="308"/>
    </location>
</feature>
<feature type="transmembrane region" description="Helical" evidence="2">
    <location>
        <begin position="320"/>
        <end position="340"/>
    </location>
</feature>
<feature type="transmembrane region" description="Helical" evidence="2">
    <location>
        <begin position="347"/>
        <end position="367"/>
    </location>
</feature>
<feature type="binding site" description="axial binding residue" evidence="2">
    <location>
        <position position="83"/>
    </location>
    <ligand>
        <name>heme b</name>
        <dbReference type="ChEBI" id="CHEBI:60344"/>
        <label>b562</label>
    </ligand>
    <ligandPart>
        <name>Fe</name>
        <dbReference type="ChEBI" id="CHEBI:18248"/>
    </ligandPart>
</feature>
<feature type="binding site" description="axial binding residue" evidence="2">
    <location>
        <position position="97"/>
    </location>
    <ligand>
        <name>heme b</name>
        <dbReference type="ChEBI" id="CHEBI:60344"/>
        <label>b566</label>
    </ligand>
    <ligandPart>
        <name>Fe</name>
        <dbReference type="ChEBI" id="CHEBI:18248"/>
    </ligandPart>
</feature>
<feature type="binding site" description="axial binding residue" evidence="2">
    <location>
        <position position="182"/>
    </location>
    <ligand>
        <name>heme b</name>
        <dbReference type="ChEBI" id="CHEBI:60344"/>
        <label>b562</label>
    </ligand>
    <ligandPart>
        <name>Fe</name>
        <dbReference type="ChEBI" id="CHEBI:18248"/>
    </ligandPart>
</feature>
<feature type="binding site" description="axial binding residue" evidence="2">
    <location>
        <position position="196"/>
    </location>
    <ligand>
        <name>heme b</name>
        <dbReference type="ChEBI" id="CHEBI:60344"/>
        <label>b566</label>
    </ligand>
    <ligandPart>
        <name>Fe</name>
        <dbReference type="ChEBI" id="CHEBI:18248"/>
    </ligandPart>
</feature>
<feature type="binding site" evidence="2">
    <location>
        <position position="201"/>
    </location>
    <ligand>
        <name>a ubiquinone</name>
        <dbReference type="ChEBI" id="CHEBI:16389"/>
    </ligand>
</feature>
<reference key="1">
    <citation type="journal article" date="1989" name="Nucleic Acids Res.">
        <title>Nucleotide sequence of the apocytochrome B gene in white sturgeon mitochondrial DNA.</title>
        <authorList>
            <person name="Brown J.R."/>
            <person name="Gilbert T.L."/>
            <person name="Kowbel D.J."/>
            <person name="O'Hara P.J."/>
            <person name="Buroker N.E."/>
            <person name="Beckenbach A.T."/>
            <person name="Smith M.J."/>
        </authorList>
    </citation>
    <scope>NUCLEOTIDE SEQUENCE [GENOMIC DNA]</scope>
    <source>
        <tissue>Liver</tissue>
    </source>
</reference>
<accession>P11669</accession>
<sequence length="380" mass="42490">MANIRKTHPLLKIINGAFIDLPTPSNISVWWNFGSLLGLCLITQILTGLFLAMHYTADISTAFSSVAHICRDVNYGWLIRNIHANGASFFFICLYLHVARGMYYGSYLQKETWNIGVILLLLTMMTAFVGYVLPWGQMSFWGATVITNLLSAFPDIGDTLVQWIWGGFSVDNATLTRFFAFHFLLPFVIAGASMIHLLFLHQTGSNNPTGLNSDADKVTFHPYFSYKDLFGFTLMLVGLTSVALFSPNLLGDPDNFTPANPLVTPPHIKPEWYFLFAYAILRSIPNKLGGVLALLFSILVLMLVPMLHTSKQRGNTFRPLSQILFWALVADMLVLTWIGGQPVEHPFVLIGQVASTVYFALFLIALPLTGWLENKALNWN</sequence>